<evidence type="ECO:0000250" key="1">
    <source>
        <dbReference type="UniProtKB" id="P41784"/>
    </source>
</evidence>
<evidence type="ECO:0000269" key="2">
    <source>
    </source>
</evidence>
<evidence type="ECO:0000269" key="3">
    <source>
    </source>
</evidence>
<evidence type="ECO:0000269" key="4">
    <source>
    </source>
</evidence>
<evidence type="ECO:0000269" key="5">
    <source>
    </source>
</evidence>
<evidence type="ECO:0000269" key="6">
    <source>
    </source>
</evidence>
<evidence type="ECO:0000269" key="7">
    <source>
    </source>
</evidence>
<evidence type="ECO:0000269" key="8">
    <source>
    </source>
</evidence>
<evidence type="ECO:0000303" key="9">
    <source>
    </source>
</evidence>
<evidence type="ECO:0000303" key="10">
    <source>
    </source>
</evidence>
<evidence type="ECO:0000303" key="11">
    <source>
    </source>
</evidence>
<evidence type="ECO:0000303" key="12">
    <source>
    </source>
</evidence>
<evidence type="ECO:0000305" key="13"/>
<evidence type="ECO:0000305" key="14">
    <source>
    </source>
</evidence>
<evidence type="ECO:0000312" key="15">
    <source>
        <dbReference type="EMBL" id="AAL20330.1"/>
    </source>
</evidence>
<sequence>MDIAQLVDMLSHMAHQAGQAINDKMNGNDLLNPESMIKAQFALQQYSTFINYESSLIKMIKDMLSGIIAKI</sequence>
<dbReference type="EMBL" id="AE006468">
    <property type="protein sequence ID" value="AAL20330.1"/>
    <property type="molecule type" value="Genomic_DNA"/>
</dbReference>
<dbReference type="RefSeq" id="NP_460371.1">
    <property type="nucleotide sequence ID" value="NC_003197.2"/>
</dbReference>
<dbReference type="RefSeq" id="WP_000350226.1">
    <property type="nucleotide sequence ID" value="NC_003197.2"/>
</dbReference>
<dbReference type="SMR" id="H9L4C5"/>
<dbReference type="STRING" id="99287.STM1406"/>
<dbReference type="PaxDb" id="99287-STM1406"/>
<dbReference type="GeneID" id="1252924"/>
<dbReference type="KEGG" id="stm:STM1406"/>
<dbReference type="PATRIC" id="fig|99287.12.peg.1490"/>
<dbReference type="HOGENOM" id="CLU_198121_1_0_6"/>
<dbReference type="OMA" id="YESAIMR"/>
<dbReference type="BioCyc" id="SENT99287:STM1406-MONOMER"/>
<dbReference type="Proteomes" id="UP000001014">
    <property type="component" value="Chromosome"/>
</dbReference>
<dbReference type="GO" id="GO:0009986">
    <property type="term" value="C:cell surface"/>
    <property type="evidence" value="ECO:0007669"/>
    <property type="project" value="UniProtKB-SubCell"/>
</dbReference>
<dbReference type="GO" id="GO:0005576">
    <property type="term" value="C:extracellular region"/>
    <property type="evidence" value="ECO:0007669"/>
    <property type="project" value="UniProtKB-SubCell"/>
</dbReference>
<dbReference type="GO" id="GO:0030257">
    <property type="term" value="C:type III protein secretion system complex"/>
    <property type="evidence" value="ECO:0007669"/>
    <property type="project" value="InterPro"/>
</dbReference>
<dbReference type="GO" id="GO:0030254">
    <property type="term" value="P:protein secretion by the type III secretion system"/>
    <property type="evidence" value="ECO:0007669"/>
    <property type="project" value="InterPro"/>
</dbReference>
<dbReference type="Gene3D" id="1.20.58.90">
    <property type="match status" value="1"/>
</dbReference>
<dbReference type="InterPro" id="IPR021123">
    <property type="entry name" value="T3SS_needle-like"/>
</dbReference>
<dbReference type="InterPro" id="IPR037203">
    <property type="entry name" value="T3SS_needle-like_sf"/>
</dbReference>
<dbReference type="InterPro" id="IPR011841">
    <property type="entry name" value="T3SS_needle_YscF"/>
</dbReference>
<dbReference type="NCBIfam" id="TIGR02105">
    <property type="entry name" value="III_needle"/>
    <property type="match status" value="1"/>
</dbReference>
<dbReference type="Pfam" id="PF09392">
    <property type="entry name" value="T3SS_needle_F"/>
    <property type="match status" value="1"/>
</dbReference>
<dbReference type="SUPFAM" id="SSF140129">
    <property type="entry name" value="MxiH-like"/>
    <property type="match status" value="1"/>
</dbReference>
<keyword id="KW-0653">Protein transport</keyword>
<keyword id="KW-1185">Reference proteome</keyword>
<keyword id="KW-0964">Secreted</keyword>
<keyword id="KW-0813">Transport</keyword>
<keyword id="KW-0843">Virulence</keyword>
<gene>
    <name evidence="14" type="primary">sctF2</name>
    <name evidence="15" type="synonym">ssaG</name>
    <name evidence="15" type="ordered locus">STM1406</name>
</gene>
<comment type="function">
    <text evidence="1">Component of the type III secretion system (T3SS), also called injectisome, which is used to inject bacterial effector proteins into eukaryotic host cells (By similarity). SsaG/SctF2 forms the external needle filament that protrudes from the bacterial surface (By similarity).</text>
</comment>
<comment type="function">
    <text evidence="5">During infection, can induce innate immune responses (PubMed:24643544). The needle proteins interact with host TLR2 or TLR4, and induce signaling by NF-kappa-B and/or AP-1 (PubMed:24643544). This activation is MyD88 dependent and results in increased expression of cytokines, including TNF-alpha, IL-6 and IL-8 (PubMed:24643544).</text>
</comment>
<comment type="subunit">
    <text evidence="1 7">The core secretion machinery of the T3SS is composed of approximately 20 different proteins, including cytoplasmic components, a base, an export apparatus and a needle (PubMed:30107569). This subunit polymerizes and forms the helical needle filament (By similarity).</text>
</comment>
<comment type="subcellular location">
    <subcellularLocation>
        <location evidence="1">Secreted</location>
    </subcellularLocation>
    <subcellularLocation>
        <location evidence="1">Cell surface</location>
    </subcellularLocation>
</comment>
<comment type="induction">
    <text evidence="2 3 4 6 8">Expressed when residing in the host ileal loop, host macrophages, and when in an acidic environment (PubMed:16304611, PubMed:17630976, PubMed:19858298, PubMed:28704543). Repressed by methyl-3,4-dephostatin (PubMed:32413287).</text>
</comment>
<comment type="similarity">
    <text evidence="13">Belongs to the SctF family.</text>
</comment>
<proteinExistence type="evidence at protein level"/>
<accession>H9L4C5</accession>
<feature type="chain" id="PRO_0000458643" description="SPI-2 type 3 secretion system needle filament protein">
    <location>
        <begin position="1"/>
        <end position="71"/>
    </location>
</feature>
<protein>
    <recommendedName>
        <fullName evidence="13">SPI-2 type 3 secretion system needle filament protein</fullName>
        <shortName evidence="13">T3SS-2 needle filament protein</shortName>
    </recommendedName>
</protein>
<organism>
    <name type="scientific">Salmonella typhimurium (strain LT2 / SGSC1412 / ATCC 700720)</name>
    <dbReference type="NCBI Taxonomy" id="99287"/>
    <lineage>
        <taxon>Bacteria</taxon>
        <taxon>Pseudomonadati</taxon>
        <taxon>Pseudomonadota</taxon>
        <taxon>Gammaproteobacteria</taxon>
        <taxon>Enterobacterales</taxon>
        <taxon>Enterobacteriaceae</taxon>
        <taxon>Salmonella</taxon>
    </lineage>
</organism>
<reference key="1">
    <citation type="journal article" date="2001" name="Nature">
        <title>Complete genome sequence of Salmonella enterica serovar Typhimurium LT2.</title>
        <authorList>
            <person name="McClelland M."/>
            <person name="Sanderson K.E."/>
            <person name="Spieth J."/>
            <person name="Clifton S.W."/>
            <person name="Latreille P."/>
            <person name="Courtney L."/>
            <person name="Porwollik S."/>
            <person name="Ali J."/>
            <person name="Dante M."/>
            <person name="Du F."/>
            <person name="Hou S."/>
            <person name="Layman D."/>
            <person name="Leonard S."/>
            <person name="Nguyen C."/>
            <person name="Scott K."/>
            <person name="Holmes A."/>
            <person name="Grewal N."/>
            <person name="Mulvaney E."/>
            <person name="Ryan E."/>
            <person name="Sun H."/>
            <person name="Florea L."/>
            <person name="Miller W."/>
            <person name="Stoneking T."/>
            <person name="Nhan M."/>
            <person name="Waterston R."/>
            <person name="Wilson R.K."/>
        </authorList>
    </citation>
    <scope>NUCLEOTIDE SEQUENCE [LARGE SCALE GENOMIC DNA]</scope>
    <source>
        <strain>LT2 / SGSC1412 / ATCC 700720</strain>
    </source>
</reference>
<reference key="2">
    <citation type="journal article" date="2005" name="PLoS Pathog.">
        <title>Salmonella pathogenicity island 2 is expressed prior to penetrating the intestine.</title>
        <authorList>
            <person name="Brown N.F."/>
            <person name="Vallance B.A."/>
            <person name="Coombes B.K."/>
            <person name="Valdez Y."/>
            <person name="Coburn B.A."/>
            <person name="Finlay B.B."/>
        </authorList>
    </citation>
    <scope>INDUCTION</scope>
    <source>
        <strain evidence="9">SL1344</strain>
    </source>
</reference>
<reference key="3">
    <citation type="journal article" date="2007" name="Mol. Microbiol.">
        <title>The response regulator SsrB activates expression of diverse Salmonella pathogenicity island 2 promoters and counters silencing by the nucleoid-associated protein H-NS.</title>
        <authorList>
            <person name="Walthers D."/>
            <person name="Carroll R.K."/>
            <person name="Navarre W.W."/>
            <person name="Libby S.J."/>
            <person name="Fang F.C."/>
            <person name="Kenney L.J."/>
        </authorList>
    </citation>
    <scope>INDUCTION</scope>
    <source>
        <strain evidence="10">14028s / SGSC 2262</strain>
    </source>
</reference>
<reference key="4">
    <citation type="journal article" date="2010" name="Infect. Immun.">
        <title>Systematic analysis of the SsrAB virulon of Salmonella enterica.</title>
        <authorList>
            <person name="Xu X."/>
            <person name="Hensel M."/>
        </authorList>
    </citation>
    <scope>INDUCTION</scope>
    <source>
        <strain evidence="11">ATCC 14028 / SGSC 2980 / CDC 6516-60 / NCTC 12023</strain>
    </source>
</reference>
<reference key="5">
    <citation type="journal article" date="2014" name="Infect. Immun.">
        <title>Type III secretion needle proteins induce cell signaling and cytokine secretion via Toll-like receptors.</title>
        <authorList>
            <person name="Jessen D.L."/>
            <person name="Osei-Owusu P."/>
            <person name="Toosky M."/>
            <person name="Roughead W."/>
            <person name="Bradley D.S."/>
            <person name="Nilles M.L."/>
        </authorList>
    </citation>
    <scope>FUNCTION IN INDUCTION OF HOST CELLULAR RESPONSES</scope>
</reference>
<reference key="6">
    <citation type="journal article" date="1998" name="Microbiol. Mol. Biol. Rev.">
        <title>Type III protein secretion systems in bacterial pathogens of animals and plants.</title>
        <authorList>
            <person name="Hueck C.J."/>
        </authorList>
    </citation>
    <scope>REVIEW</scope>
    <scope>NOMENCLATURE</scope>
</reference>
<reference key="7">
    <citation type="journal article" date="2017" name="PLoS Pathog.">
        <title>The transcriptional regulator SsrB is involved in a molecular switch controlling virulence lifestyles of Salmonella.</title>
        <authorList>
            <person name="Perez-Morales D."/>
            <person name="Banda M.M."/>
            <person name="Chau N.Y.E."/>
            <person name="Salgado H."/>
            <person name="Martinez-Flores I."/>
            <person name="Ibarra J.A."/>
            <person name="Ilyas B."/>
            <person name="Coombes B.K."/>
            <person name="Bustamante V.H."/>
        </authorList>
    </citation>
    <scope>INDUCTION</scope>
    <source>
        <strain evidence="12">SL1344</strain>
    </source>
</reference>
<reference key="8">
    <citation type="journal article" date="2018" name="FEMS Microbiol. Lett.">
        <title>Bacterial type III secretion systems: a complex device for the delivery of bacterial effector proteins into eukaryotic host cells.</title>
        <authorList>
            <person name="Wagner S."/>
            <person name="Grin I."/>
            <person name="Malmsheimer S."/>
            <person name="Singh N."/>
            <person name="Torres-Vargas C.E."/>
            <person name="Westerhausen S."/>
        </authorList>
    </citation>
    <scope>REVIEW</scope>
    <scope>SUBUNIT</scope>
</reference>
<reference key="9">
    <citation type="journal article" date="2020" name="Cell Chem. Biol.">
        <title>Targeting Two-Component Systems Uncovers a Small-Molecule Inhibitor of Salmonella Virulence.</title>
        <authorList>
            <person name="Tsai C.N."/>
            <person name="MacNair C.R."/>
            <person name="Cao M.P.T."/>
            <person name="Perry J.N."/>
            <person name="Magolan J."/>
            <person name="Brown E.D."/>
            <person name="Coombes B.K."/>
        </authorList>
    </citation>
    <scope>INDUCTION</scope>
</reference>
<name>SCTF2_SALTY</name>